<feature type="chain" id="PRO_0000105499" description="DNA polymerase III subunit gamma/tau">
    <location>
        <begin position="1"/>
        <end position="681"/>
    </location>
</feature>
<feature type="binding site" evidence="3">
    <location>
        <begin position="44"/>
        <end position="51"/>
    </location>
    <ligand>
        <name>ATP</name>
        <dbReference type="ChEBI" id="CHEBI:30616"/>
    </ligand>
</feature>
<feature type="binding site" evidence="2">
    <location>
        <position position="63"/>
    </location>
    <ligand>
        <name>Zn(2+)</name>
        <dbReference type="ChEBI" id="CHEBI:29105"/>
    </ligand>
</feature>
<feature type="binding site" evidence="2">
    <location>
        <position position="71"/>
    </location>
    <ligand>
        <name>Zn(2+)</name>
        <dbReference type="ChEBI" id="CHEBI:29105"/>
    </ligand>
</feature>
<feature type="binding site" evidence="2">
    <location>
        <position position="74"/>
    </location>
    <ligand>
        <name>Zn(2+)</name>
        <dbReference type="ChEBI" id="CHEBI:29105"/>
    </ligand>
</feature>
<feature type="binding site" evidence="2">
    <location>
        <position position="77"/>
    </location>
    <ligand>
        <name>Zn(2+)</name>
        <dbReference type="ChEBI" id="CHEBI:29105"/>
    </ligand>
</feature>
<proteinExistence type="inferred from homology"/>
<protein>
    <recommendedName>
        <fullName>DNA polymerase III subunit gamma/tau</fullName>
        <ecNumber>2.7.7.7</ecNumber>
    </recommendedName>
</protein>
<evidence type="ECO:0000250" key="1"/>
<evidence type="ECO:0000250" key="2">
    <source>
        <dbReference type="UniProtKB" id="P06710"/>
    </source>
</evidence>
<evidence type="ECO:0000255" key="3"/>
<evidence type="ECO:0000305" key="4"/>
<reference key="1">
    <citation type="journal article" date="1996" name="Nucleic Acids Res.">
        <title>Complete sequence analysis of the genome of the bacterium Mycoplasma pneumoniae.</title>
        <authorList>
            <person name="Himmelreich R."/>
            <person name="Hilbert H."/>
            <person name="Plagens H."/>
            <person name="Pirkl E."/>
            <person name="Li B.-C."/>
            <person name="Herrmann R."/>
        </authorList>
    </citation>
    <scope>NUCLEOTIDE SEQUENCE [LARGE SCALE GENOMIC DNA]</scope>
    <source>
        <strain>ATCC 29342 / M129 / Subtype 1</strain>
    </source>
</reference>
<accession>P75177</accession>
<gene>
    <name type="primary">dnaX</name>
    <name type="ordered locus">MPN_618</name>
    <name type="ORF">MP224</name>
</gene>
<comment type="function">
    <text>DNA polymerase III is a complex, multichain enzyme responsible for most of the replicative synthesis in bacteria. This DNA polymerase also exhibits 3' to 5' exonuclease activity.</text>
</comment>
<comment type="catalytic activity">
    <reaction>
        <text>DNA(n) + a 2'-deoxyribonucleoside 5'-triphosphate = DNA(n+1) + diphosphate</text>
        <dbReference type="Rhea" id="RHEA:22508"/>
        <dbReference type="Rhea" id="RHEA-COMP:17339"/>
        <dbReference type="Rhea" id="RHEA-COMP:17340"/>
        <dbReference type="ChEBI" id="CHEBI:33019"/>
        <dbReference type="ChEBI" id="CHEBI:61560"/>
        <dbReference type="ChEBI" id="CHEBI:173112"/>
        <dbReference type="EC" id="2.7.7.7"/>
    </reaction>
</comment>
<comment type="subunit">
    <text evidence="1">DNA polymerase III contains a core (composed of alpha, epsilon and theta chains) that associates with a tau subunit. This core dimerizes to form the POLIII' complex. PolIII' associates with the gamma complex (composed of gamma, delta, delta', psi and chi chains) and with the beta chain to form the complete DNA polymerase III complex (By similarity).</text>
</comment>
<comment type="similarity">
    <text evidence="4">Belongs to the DnaX/STICHEL family.</text>
</comment>
<name>DPO3X_MYCPN</name>
<organism>
    <name type="scientific">Mycoplasma pneumoniae (strain ATCC 29342 / M129 / Subtype 1)</name>
    <name type="common">Mycoplasmoides pneumoniae</name>
    <dbReference type="NCBI Taxonomy" id="272634"/>
    <lineage>
        <taxon>Bacteria</taxon>
        <taxon>Bacillati</taxon>
        <taxon>Mycoplasmatota</taxon>
        <taxon>Mycoplasmoidales</taxon>
        <taxon>Mycoplasmoidaceae</taxon>
        <taxon>Mycoplasmoides</taxon>
    </lineage>
</organism>
<sequence>MRKVLYQKYRPTKFSDTVGQDSIKRIIVNAITQDQLPHGYIFAGERGTGKTTFAKIIAKAINCLNWNGDVCNQCEACQAINSNSAIDVFEIDAASKNGINDIRELAENVFNLPFKFKKKVYILDEAHMLTPQSWSGLLKTLEEAPDYVLFIFATTEFNKIPITILSRCQSFFFKQITNDLIQQRLAEVAAKESIKITTDALVKLADLAQGSLRDGLSLLDQISNFSESKTISLADVEKTFNLLDKEQKFGFIEAVLSGDLKQSFHLIDNFESQGINFVHFLRELFALTVDLYGYVKTGQIAVVKPSDQTMAAKLRFHPKQYALLVQAIEANTGYGPSQLSLSDQIKAIVIHYNNAVSKEPHIPAYTPVVQTQSPAKEHVPSKTVEEAKPQLPAKEPVLYKVIEEPKVSSFVKDPVASKLIEQPQTIVQPEAQQEITEVEQPTETSPAPATDLFGLAIKPEVVRKRGRRPLSVENTDFFQPAVKKLIQPVSKPAPIKLIEPSDNNPVSIPIKLNRAVIAVSVYGHNDPKLVAHFQQLLDSFKREFTQAEKTKDSSYLKQFSDKFTASDLSKVIKVLAASPFGLVLIFEDKEIATRLWKEALTEATAQATLLEIFQQNLFLSSFTLSEYETKVLAKVEQLTHKPQVLQLQQLEQLSSTVVKKAQKTAAQEIADTFFKGLYEEK</sequence>
<dbReference type="EC" id="2.7.7.7"/>
<dbReference type="EMBL" id="U00089">
    <property type="protein sequence ID" value="AAB95872.1"/>
    <property type="molecule type" value="Genomic_DNA"/>
</dbReference>
<dbReference type="PIR" id="S73550">
    <property type="entry name" value="S73550"/>
</dbReference>
<dbReference type="RefSeq" id="NP_110307.1">
    <property type="nucleotide sequence ID" value="NC_000912.1"/>
</dbReference>
<dbReference type="RefSeq" id="WP_010874975.1">
    <property type="nucleotide sequence ID" value="NC_000912.1"/>
</dbReference>
<dbReference type="SMR" id="P75177"/>
<dbReference type="IntAct" id="P75177">
    <property type="interactions" value="5"/>
</dbReference>
<dbReference type="STRING" id="272634.MPN_618"/>
<dbReference type="EnsemblBacteria" id="AAB95872">
    <property type="protein sequence ID" value="AAB95872"/>
    <property type="gene ID" value="MPN_618"/>
</dbReference>
<dbReference type="KEGG" id="mpn:MPN_618"/>
<dbReference type="PATRIC" id="fig|272634.6.peg.682"/>
<dbReference type="HOGENOM" id="CLU_006229_0_3_14"/>
<dbReference type="OrthoDB" id="9810148at2"/>
<dbReference type="BioCyc" id="MPNE272634:G1GJ3-997-MONOMER"/>
<dbReference type="Proteomes" id="UP000000808">
    <property type="component" value="Chromosome"/>
</dbReference>
<dbReference type="GO" id="GO:0009360">
    <property type="term" value="C:DNA polymerase III complex"/>
    <property type="evidence" value="ECO:0007669"/>
    <property type="project" value="InterPro"/>
</dbReference>
<dbReference type="GO" id="GO:0005524">
    <property type="term" value="F:ATP binding"/>
    <property type="evidence" value="ECO:0007669"/>
    <property type="project" value="UniProtKB-KW"/>
</dbReference>
<dbReference type="GO" id="GO:0016887">
    <property type="term" value="F:ATP hydrolysis activity"/>
    <property type="evidence" value="ECO:0007669"/>
    <property type="project" value="InterPro"/>
</dbReference>
<dbReference type="GO" id="GO:0003887">
    <property type="term" value="F:DNA-directed DNA polymerase activity"/>
    <property type="evidence" value="ECO:0007669"/>
    <property type="project" value="UniProtKB-KW"/>
</dbReference>
<dbReference type="GO" id="GO:0046872">
    <property type="term" value="F:metal ion binding"/>
    <property type="evidence" value="ECO:0007669"/>
    <property type="project" value="UniProtKB-KW"/>
</dbReference>
<dbReference type="GO" id="GO:0006261">
    <property type="term" value="P:DNA-templated DNA replication"/>
    <property type="evidence" value="ECO:0007669"/>
    <property type="project" value="TreeGrafter"/>
</dbReference>
<dbReference type="CDD" id="cd00009">
    <property type="entry name" value="AAA"/>
    <property type="match status" value="1"/>
</dbReference>
<dbReference type="CDD" id="cd18137">
    <property type="entry name" value="HLD_clamp_pol_III_gamma_tau"/>
    <property type="match status" value="1"/>
</dbReference>
<dbReference type="Gene3D" id="1.10.8.60">
    <property type="match status" value="1"/>
</dbReference>
<dbReference type="Gene3D" id="3.40.50.300">
    <property type="entry name" value="P-loop containing nucleotide triphosphate hydrolases"/>
    <property type="match status" value="1"/>
</dbReference>
<dbReference type="InterPro" id="IPR003593">
    <property type="entry name" value="AAA+_ATPase"/>
</dbReference>
<dbReference type="InterPro" id="IPR012763">
    <property type="entry name" value="DNA_pol_III_sug/sutau_N"/>
</dbReference>
<dbReference type="InterPro" id="IPR050238">
    <property type="entry name" value="DNA_Rep/Repair_Clamp_Loader"/>
</dbReference>
<dbReference type="InterPro" id="IPR045085">
    <property type="entry name" value="HLD_clamp_pol_III_gamma_tau"/>
</dbReference>
<dbReference type="InterPro" id="IPR027417">
    <property type="entry name" value="P-loop_NTPase"/>
</dbReference>
<dbReference type="NCBIfam" id="TIGR02397">
    <property type="entry name" value="dnaX_nterm"/>
    <property type="match status" value="1"/>
</dbReference>
<dbReference type="PANTHER" id="PTHR11669:SF0">
    <property type="entry name" value="PROTEIN STICHEL-LIKE 2"/>
    <property type="match status" value="1"/>
</dbReference>
<dbReference type="PANTHER" id="PTHR11669">
    <property type="entry name" value="REPLICATION FACTOR C / DNA POLYMERASE III GAMMA-TAU SUBUNIT"/>
    <property type="match status" value="1"/>
</dbReference>
<dbReference type="Pfam" id="PF13177">
    <property type="entry name" value="DNA_pol3_delta2"/>
    <property type="match status" value="1"/>
</dbReference>
<dbReference type="Pfam" id="PF22608">
    <property type="entry name" value="DNAX_ATPase_lid"/>
    <property type="match status" value="1"/>
</dbReference>
<dbReference type="SMART" id="SM00382">
    <property type="entry name" value="AAA"/>
    <property type="match status" value="1"/>
</dbReference>
<dbReference type="SUPFAM" id="SSF52540">
    <property type="entry name" value="P-loop containing nucleoside triphosphate hydrolases"/>
    <property type="match status" value="1"/>
</dbReference>
<keyword id="KW-0067">ATP-binding</keyword>
<keyword id="KW-0235">DNA replication</keyword>
<keyword id="KW-0239">DNA-directed DNA polymerase</keyword>
<keyword id="KW-0479">Metal-binding</keyword>
<keyword id="KW-0547">Nucleotide-binding</keyword>
<keyword id="KW-0548">Nucleotidyltransferase</keyword>
<keyword id="KW-1185">Reference proteome</keyword>
<keyword id="KW-0808">Transferase</keyword>
<keyword id="KW-0862">Zinc</keyword>